<accession>Q48PB0</accession>
<comment type="function">
    <text evidence="2">Catalyzes the ATP-dependent phosphorylation of 3-oxo-tetronate to 3-oxo-tetronate 4-phosphate.</text>
</comment>
<comment type="catalytic activity">
    <reaction evidence="2">
        <text>3-dehydro-L-erythronate + ATP = 3-dehydro-4-O-phospho-L-erythronate + ADP + H(+)</text>
        <dbReference type="Rhea" id="RHEA:52552"/>
        <dbReference type="ChEBI" id="CHEBI:15378"/>
        <dbReference type="ChEBI" id="CHEBI:30616"/>
        <dbReference type="ChEBI" id="CHEBI:136592"/>
        <dbReference type="ChEBI" id="CHEBI:136670"/>
        <dbReference type="ChEBI" id="CHEBI:456216"/>
        <dbReference type="EC" id="2.7.1.217"/>
    </reaction>
</comment>
<comment type="catalytic activity">
    <reaction evidence="2">
        <text>3-dehydro-D-erythronate + ATP = 3-dehydro-4-O-phospho-D-erythronate + ADP + H(+)</text>
        <dbReference type="Rhea" id="RHEA:52556"/>
        <dbReference type="ChEBI" id="CHEBI:15378"/>
        <dbReference type="ChEBI" id="CHEBI:30616"/>
        <dbReference type="ChEBI" id="CHEBI:57958"/>
        <dbReference type="ChEBI" id="CHEBI:136593"/>
        <dbReference type="ChEBI" id="CHEBI:456216"/>
        <dbReference type="EC" id="2.7.1.217"/>
    </reaction>
</comment>
<comment type="similarity">
    <text evidence="4">Belongs to the four-carbon acid sugar kinase family.</text>
</comment>
<evidence type="ECO:0000250" key="1">
    <source>
        <dbReference type="UniProtKB" id="Q0KBC8"/>
    </source>
</evidence>
<evidence type="ECO:0000269" key="2">
    <source>
    </source>
</evidence>
<evidence type="ECO:0000303" key="3">
    <source>
    </source>
</evidence>
<evidence type="ECO:0000305" key="4"/>
<evidence type="ECO:0000312" key="5">
    <source>
        <dbReference type="EMBL" id="AAZ35071.1"/>
    </source>
</evidence>
<feature type="chain" id="PRO_0000439685" description="3-oxo-tetronate kinase">
    <location>
        <begin position="1"/>
        <end position="429"/>
    </location>
</feature>
<feature type="binding site" evidence="1">
    <location>
        <position position="268"/>
    </location>
    <ligand>
        <name>ATP</name>
        <dbReference type="ChEBI" id="CHEBI:30616"/>
    </ligand>
</feature>
<feature type="binding site" evidence="1">
    <location>
        <begin position="366"/>
        <end position="369"/>
    </location>
    <ligand>
        <name>ATP</name>
        <dbReference type="ChEBI" id="CHEBI:30616"/>
    </ligand>
</feature>
<feature type="binding site" evidence="1">
    <location>
        <position position="410"/>
    </location>
    <ligand>
        <name>ATP</name>
        <dbReference type="ChEBI" id="CHEBI:30616"/>
    </ligand>
</feature>
<dbReference type="EC" id="2.7.1.217" evidence="2"/>
<dbReference type="EMBL" id="CP000058">
    <property type="protein sequence ID" value="AAZ35071.1"/>
    <property type="molecule type" value="Genomic_DNA"/>
</dbReference>
<dbReference type="RefSeq" id="WP_004666462.1">
    <property type="nucleotide sequence ID" value="NC_005773.3"/>
</dbReference>
<dbReference type="SMR" id="Q48PB0"/>
<dbReference type="KEGG" id="psp:PSPPH_0456"/>
<dbReference type="eggNOG" id="COG3395">
    <property type="taxonomic scope" value="Bacteria"/>
</dbReference>
<dbReference type="HOGENOM" id="CLU_029424_1_0_6"/>
<dbReference type="Proteomes" id="UP000000551">
    <property type="component" value="Chromosome"/>
</dbReference>
<dbReference type="GO" id="GO:0005524">
    <property type="term" value="F:ATP binding"/>
    <property type="evidence" value="ECO:0007669"/>
    <property type="project" value="UniProtKB-KW"/>
</dbReference>
<dbReference type="GO" id="GO:0016301">
    <property type="term" value="F:kinase activity"/>
    <property type="evidence" value="ECO:0007669"/>
    <property type="project" value="UniProtKB-KW"/>
</dbReference>
<dbReference type="Gene3D" id="3.40.980.20">
    <property type="entry name" value="Four-carbon acid sugar kinase, nucleotide binding domain"/>
    <property type="match status" value="1"/>
</dbReference>
<dbReference type="Gene3D" id="3.40.50.10840">
    <property type="entry name" value="Putative sugar-binding, N-terminal domain"/>
    <property type="match status" value="1"/>
</dbReference>
<dbReference type="InterPro" id="IPR010737">
    <property type="entry name" value="4-carb_acid_sugar_kinase_N"/>
</dbReference>
<dbReference type="InterPro" id="IPR037051">
    <property type="entry name" value="4-carb_acid_sugar_kinase_N_sf"/>
</dbReference>
<dbReference type="InterPro" id="IPR031475">
    <property type="entry name" value="NBD_C"/>
</dbReference>
<dbReference type="InterPro" id="IPR042213">
    <property type="entry name" value="NBD_C_sf"/>
</dbReference>
<dbReference type="InterPro" id="IPR050007">
    <property type="entry name" value="OtnK"/>
</dbReference>
<dbReference type="NCBIfam" id="NF043035">
    <property type="entry name" value="OxoTetrKin"/>
    <property type="match status" value="1"/>
</dbReference>
<dbReference type="Pfam" id="PF17042">
    <property type="entry name" value="NBD_C"/>
    <property type="match status" value="1"/>
</dbReference>
<dbReference type="Pfam" id="PF07005">
    <property type="entry name" value="SBD_N"/>
    <property type="match status" value="1"/>
</dbReference>
<dbReference type="SUPFAM" id="SSF142764">
    <property type="entry name" value="YgbK-like"/>
    <property type="match status" value="1"/>
</dbReference>
<proteinExistence type="evidence at protein level"/>
<protein>
    <recommendedName>
        <fullName evidence="3">3-oxo-tetronate kinase</fullName>
        <ecNumber evidence="2">2.7.1.217</ecNumber>
    </recommendedName>
    <alternativeName>
        <fullName evidence="4">3-dehydrotetronate 4-kinase</fullName>
    </alternativeName>
</protein>
<name>OTNK_PSE14</name>
<sequence>MSLNNARPLLGCIADDFTGATDLANMLVRGGMRTVQSIGIPSAEMAAGLDADAIVIALKSRTTPSADAVAESLAALEWLRERGCEQIFFKYCSTFDSTAAGNIGQVSEALLEQLDSDFTLACPAFPENGRTIFRGHLFVQDQLLSESGMQNHPLTPMTDANLVRVLQAQTRHKVGLLRYDSIAQGVEGVRNRIAELRAEGVSMAIADALSDADLYTLGEACADLPLLTGGSGLALGLPGNFRKAGKLRDIDAAKQVAISGGEVVLAGSASVATNGQVAAWLEDNRPALRINPLDLAAGKPVVEQALTFARDAGQTVLIYATSTPDEVKAVQKELGVERSGAMVEAALGEIAKGLLNAGVRRFVVAGGETSGAVVQALGVQLLQIGAQIDPGVPATVSSGAQPLALALKSGNFGARDFFAKALKQLAGAA</sequence>
<keyword id="KW-0067">ATP-binding</keyword>
<keyword id="KW-0119">Carbohydrate metabolism</keyword>
<keyword id="KW-0418">Kinase</keyword>
<keyword id="KW-0547">Nucleotide-binding</keyword>
<keyword id="KW-0808">Transferase</keyword>
<gene>
    <name evidence="3" type="primary">otnK</name>
    <name evidence="5" type="ordered locus">PSPPH_0456</name>
</gene>
<organism>
    <name type="scientific">Pseudomonas savastanoi pv. phaseolicola (strain 1448A / Race 6)</name>
    <name type="common">Pseudomonas syringae pv. phaseolicola (strain 1448A / Race 6)</name>
    <dbReference type="NCBI Taxonomy" id="264730"/>
    <lineage>
        <taxon>Bacteria</taxon>
        <taxon>Pseudomonadati</taxon>
        <taxon>Pseudomonadota</taxon>
        <taxon>Gammaproteobacteria</taxon>
        <taxon>Pseudomonadales</taxon>
        <taxon>Pseudomonadaceae</taxon>
        <taxon>Pseudomonas</taxon>
    </lineage>
</organism>
<reference key="1">
    <citation type="journal article" date="2005" name="J. Bacteriol.">
        <title>Whole-genome sequence analysis of Pseudomonas syringae pv. phaseolicola 1448A reveals divergence among pathovars in genes involved in virulence and transposition.</title>
        <authorList>
            <person name="Joardar V."/>
            <person name="Lindeberg M."/>
            <person name="Jackson R.W."/>
            <person name="Selengut J."/>
            <person name="Dodson R."/>
            <person name="Brinkac L.M."/>
            <person name="Daugherty S.C."/>
            <person name="DeBoy R.T."/>
            <person name="Durkin A.S."/>
            <person name="Gwinn Giglio M."/>
            <person name="Madupu R."/>
            <person name="Nelson W.C."/>
            <person name="Rosovitz M.J."/>
            <person name="Sullivan S.A."/>
            <person name="Crabtree J."/>
            <person name="Creasy T."/>
            <person name="Davidsen T.M."/>
            <person name="Haft D.H."/>
            <person name="Zafar N."/>
            <person name="Zhou L."/>
            <person name="Halpin R."/>
            <person name="Holley T."/>
            <person name="Khouri H.M."/>
            <person name="Feldblyum T.V."/>
            <person name="White O."/>
            <person name="Fraser C.M."/>
            <person name="Chatterjee A.K."/>
            <person name="Cartinhour S."/>
            <person name="Schneider D."/>
            <person name="Mansfield J.W."/>
            <person name="Collmer A."/>
            <person name="Buell R."/>
        </authorList>
    </citation>
    <scope>NUCLEOTIDE SEQUENCE [LARGE SCALE GENOMIC DNA]</scope>
    <source>
        <strain>1448A / Race 6</strain>
    </source>
</reference>
<reference key="2">
    <citation type="journal article" date="2016" name="Proc. Natl. Acad. Sci. U.S.A.">
        <title>Assignment of function to a domain of unknown function: DUF1537 is a new kinase family in catabolic pathways for acid sugars.</title>
        <authorList>
            <person name="Zhang X."/>
            <person name="Carter M.S."/>
            <person name="Vetting M.W."/>
            <person name="San Francisco B."/>
            <person name="Zhao S."/>
            <person name="Al-Obaidi N.F."/>
            <person name="Solbiati J.O."/>
            <person name="Thiaville J.J."/>
            <person name="de Crecy-Lagard V."/>
            <person name="Jacobson M.P."/>
            <person name="Almo S.C."/>
            <person name="Gerlt J.A."/>
        </authorList>
    </citation>
    <scope>FUNCTION</scope>
    <scope>CATALYTIC ACTIVITY</scope>
    <source>
        <strain>1448A / Race 6</strain>
    </source>
</reference>